<proteinExistence type="inferred from homology"/>
<name>ARNB_SALPA</name>
<organism>
    <name type="scientific">Salmonella paratyphi A (strain ATCC 9150 / SARB42)</name>
    <dbReference type="NCBI Taxonomy" id="295319"/>
    <lineage>
        <taxon>Bacteria</taxon>
        <taxon>Pseudomonadati</taxon>
        <taxon>Pseudomonadota</taxon>
        <taxon>Gammaproteobacteria</taxon>
        <taxon>Enterobacterales</taxon>
        <taxon>Enterobacteriaceae</taxon>
        <taxon>Salmonella</taxon>
    </lineage>
</organism>
<comment type="function">
    <text evidence="1">Catalyzes the conversion of UDP-4-keto-arabinose (UDP-Ara4O) to UDP-4-amino-4-deoxy-L-arabinose (UDP-L-Ara4N). The modified arabinose is attached to lipid A and is required for resistance to polymyxin and cationic antimicrobial peptides.</text>
</comment>
<comment type="catalytic activity">
    <reaction evidence="1">
        <text>UDP-4-amino-4-deoxy-beta-L-arabinose + 2-oxoglutarate = UDP-beta-L-threo-pentopyranos-4-ulose + L-glutamate</text>
        <dbReference type="Rhea" id="RHEA:24710"/>
        <dbReference type="ChEBI" id="CHEBI:16810"/>
        <dbReference type="ChEBI" id="CHEBI:29985"/>
        <dbReference type="ChEBI" id="CHEBI:58708"/>
        <dbReference type="ChEBI" id="CHEBI:58710"/>
        <dbReference type="EC" id="2.6.1.87"/>
    </reaction>
</comment>
<comment type="cofactor">
    <cofactor evidence="1">
        <name>pyridoxal 5'-phosphate</name>
        <dbReference type="ChEBI" id="CHEBI:597326"/>
    </cofactor>
</comment>
<comment type="pathway">
    <text evidence="1">Nucleotide-sugar biosynthesis; UDP-4-deoxy-4-formamido-beta-L-arabinose biosynthesis; UDP-4-deoxy-4-formamido-beta-L-arabinose from UDP-alpha-D-glucuronate: step 2/3.</text>
</comment>
<comment type="pathway">
    <text evidence="1">Bacterial outer membrane biogenesis; lipopolysaccharide biosynthesis.</text>
</comment>
<comment type="subunit">
    <text evidence="1">Homodimer.</text>
</comment>
<comment type="similarity">
    <text evidence="1">Belongs to the DegT/DnrJ/EryC1 family. ArnB subfamily.</text>
</comment>
<comment type="sequence caution" evidence="2">
    <conflict type="erroneous initiation">
        <sequence resource="EMBL-CDS" id="AAV76568"/>
    </conflict>
</comment>
<evidence type="ECO:0000255" key="1">
    <source>
        <dbReference type="HAMAP-Rule" id="MF_01167"/>
    </source>
</evidence>
<evidence type="ECO:0000305" key="2"/>
<feature type="chain" id="PRO_0000110026" description="UDP-4-amino-4-deoxy-L-arabinose--oxoglutarate aminotransferase">
    <location>
        <begin position="1"/>
        <end position="379"/>
    </location>
</feature>
<feature type="modified residue" description="N6-(pyridoxal phosphate)lysine" evidence="1">
    <location>
        <position position="182"/>
    </location>
</feature>
<accession>Q5PNA4</accession>
<dbReference type="EC" id="2.6.1.87" evidence="1"/>
<dbReference type="EMBL" id="CP000026">
    <property type="protein sequence ID" value="AAV76568.1"/>
    <property type="status" value="ALT_INIT"/>
    <property type="molecule type" value="Genomic_DNA"/>
</dbReference>
<dbReference type="SMR" id="Q5PNA4"/>
<dbReference type="KEGG" id="spt:SPA0566"/>
<dbReference type="HOGENOM" id="CLU_033332_0_3_6"/>
<dbReference type="UniPathway" id="UPA00030"/>
<dbReference type="UniPathway" id="UPA00032">
    <property type="reaction ID" value="UER00493"/>
</dbReference>
<dbReference type="Proteomes" id="UP000008185">
    <property type="component" value="Chromosome"/>
</dbReference>
<dbReference type="GO" id="GO:0016020">
    <property type="term" value="C:membrane"/>
    <property type="evidence" value="ECO:0007669"/>
    <property type="project" value="GOC"/>
</dbReference>
<dbReference type="GO" id="GO:0030170">
    <property type="term" value="F:pyridoxal phosphate binding"/>
    <property type="evidence" value="ECO:0007669"/>
    <property type="project" value="TreeGrafter"/>
</dbReference>
<dbReference type="GO" id="GO:0099620">
    <property type="term" value="F:UDP-4-amino-4-deoxy-L-arabinose aminotransferase"/>
    <property type="evidence" value="ECO:0007669"/>
    <property type="project" value="UniProtKB-EC"/>
</dbReference>
<dbReference type="GO" id="GO:0009245">
    <property type="term" value="P:lipid A biosynthetic process"/>
    <property type="evidence" value="ECO:0007669"/>
    <property type="project" value="UniProtKB-KW"/>
</dbReference>
<dbReference type="GO" id="GO:0009103">
    <property type="term" value="P:lipopolysaccharide biosynthetic process"/>
    <property type="evidence" value="ECO:0007669"/>
    <property type="project" value="UniProtKB-UniRule"/>
</dbReference>
<dbReference type="GO" id="GO:0046677">
    <property type="term" value="P:response to antibiotic"/>
    <property type="evidence" value="ECO:0007669"/>
    <property type="project" value="UniProtKB-KW"/>
</dbReference>
<dbReference type="CDD" id="cd00616">
    <property type="entry name" value="AHBA_syn"/>
    <property type="match status" value="1"/>
</dbReference>
<dbReference type="FunFam" id="3.40.640.10:FF:000040">
    <property type="entry name" value="UDP-4-amino-4-deoxy-L-arabinose--oxoglutarate aminotransferase"/>
    <property type="match status" value="1"/>
</dbReference>
<dbReference type="FunFam" id="3.90.1150.10:FF:000030">
    <property type="entry name" value="UDP-4-amino-4-deoxy-L-arabinose--oxoglutarate aminotransferase"/>
    <property type="match status" value="1"/>
</dbReference>
<dbReference type="Gene3D" id="3.90.1150.10">
    <property type="entry name" value="Aspartate Aminotransferase, domain 1"/>
    <property type="match status" value="1"/>
</dbReference>
<dbReference type="Gene3D" id="3.40.640.10">
    <property type="entry name" value="Type I PLP-dependent aspartate aminotransferase-like (Major domain)"/>
    <property type="match status" value="1"/>
</dbReference>
<dbReference type="HAMAP" id="MF_01167">
    <property type="entry name" value="ArnB_transfer"/>
    <property type="match status" value="1"/>
</dbReference>
<dbReference type="InterPro" id="IPR022850">
    <property type="entry name" value="ArnB_NH2Trfase"/>
</dbReference>
<dbReference type="InterPro" id="IPR000653">
    <property type="entry name" value="DegT/StrS_aminotransferase"/>
</dbReference>
<dbReference type="InterPro" id="IPR015424">
    <property type="entry name" value="PyrdxlP-dep_Trfase"/>
</dbReference>
<dbReference type="InterPro" id="IPR015421">
    <property type="entry name" value="PyrdxlP-dep_Trfase_major"/>
</dbReference>
<dbReference type="InterPro" id="IPR015422">
    <property type="entry name" value="PyrdxlP-dep_Trfase_small"/>
</dbReference>
<dbReference type="NCBIfam" id="NF008658">
    <property type="entry name" value="PRK11658.1"/>
    <property type="match status" value="1"/>
</dbReference>
<dbReference type="PANTHER" id="PTHR30244">
    <property type="entry name" value="TRANSAMINASE"/>
    <property type="match status" value="1"/>
</dbReference>
<dbReference type="PANTHER" id="PTHR30244:SF41">
    <property type="entry name" value="UDP-4-AMINO-4-DEOXY-L-ARABINOSE--OXOGLUTARATE AMINOTRANSFERASE"/>
    <property type="match status" value="1"/>
</dbReference>
<dbReference type="Pfam" id="PF01041">
    <property type="entry name" value="DegT_DnrJ_EryC1"/>
    <property type="match status" value="1"/>
</dbReference>
<dbReference type="PIRSF" id="PIRSF000390">
    <property type="entry name" value="PLP_StrS"/>
    <property type="match status" value="1"/>
</dbReference>
<dbReference type="SUPFAM" id="SSF53383">
    <property type="entry name" value="PLP-dependent transferases"/>
    <property type="match status" value="1"/>
</dbReference>
<sequence length="379" mass="41191">MLDFLPFSRPAMGAEELAAVKTVLDSGWITTGPKNQELEAAFCRLTGNQYAVAVSSATAGMHIALMALGIGEGDEVITPSMTWVSTLNMIVLLGANPVMVDVDRDTLMVTPEHIEAAITPQTKAIIPVHYAGAPADLDAIYALGERYGIPVIEDAAHATGTSYKGRHIGARGTAIFSFHAIKNITCAEGGIVVTDNPQFADKLRSLKFHGLGVDAWDRQSGGRAPQAEVLAPGYKYNLPDLNAAIALAQLQKLDALNARRAAIAAQYHQAMADLPFQPLSLPSWEHIHAWHLFIIRVDEARCGITRDALMASLKTKGIGTGLHFRAAHTQKYYRERFPTLTLPDTEWNSERICSLPLFPDMTESDFDRVITALHQIAGQ</sequence>
<keyword id="KW-0032">Aminotransferase</keyword>
<keyword id="KW-0046">Antibiotic resistance</keyword>
<keyword id="KW-0441">Lipid A biosynthesis</keyword>
<keyword id="KW-0444">Lipid biosynthesis</keyword>
<keyword id="KW-0443">Lipid metabolism</keyword>
<keyword id="KW-0448">Lipopolysaccharide biosynthesis</keyword>
<keyword id="KW-0663">Pyridoxal phosphate</keyword>
<keyword id="KW-0808">Transferase</keyword>
<reference key="1">
    <citation type="journal article" date="2004" name="Nat. Genet.">
        <title>Comparison of genome degradation in Paratyphi A and Typhi, human-restricted serovars of Salmonella enterica that cause typhoid.</title>
        <authorList>
            <person name="McClelland M."/>
            <person name="Sanderson K.E."/>
            <person name="Clifton S.W."/>
            <person name="Latreille P."/>
            <person name="Porwollik S."/>
            <person name="Sabo A."/>
            <person name="Meyer R."/>
            <person name="Bieri T."/>
            <person name="Ozersky P."/>
            <person name="McLellan M."/>
            <person name="Harkins C.R."/>
            <person name="Wang C."/>
            <person name="Nguyen C."/>
            <person name="Berghoff A."/>
            <person name="Elliott G."/>
            <person name="Kohlberg S."/>
            <person name="Strong C."/>
            <person name="Du F."/>
            <person name="Carter J."/>
            <person name="Kremizki C."/>
            <person name="Layman D."/>
            <person name="Leonard S."/>
            <person name="Sun H."/>
            <person name="Fulton L."/>
            <person name="Nash W."/>
            <person name="Miner T."/>
            <person name="Minx P."/>
            <person name="Delehaunty K."/>
            <person name="Fronick C."/>
            <person name="Magrini V."/>
            <person name="Nhan M."/>
            <person name="Warren W."/>
            <person name="Florea L."/>
            <person name="Spieth J."/>
            <person name="Wilson R.K."/>
        </authorList>
    </citation>
    <scope>NUCLEOTIDE SEQUENCE [LARGE SCALE GENOMIC DNA]</scope>
    <source>
        <strain>ATCC 9150 / SARB42</strain>
    </source>
</reference>
<protein>
    <recommendedName>
        <fullName evidence="1">UDP-4-amino-4-deoxy-L-arabinose--oxoglutarate aminotransferase</fullName>
        <ecNumber evidence="1">2.6.1.87</ecNumber>
    </recommendedName>
    <alternativeName>
        <fullName evidence="1">UDP-(beta-L-threo-pentapyranosyl-4''-ulose diphosphate) aminotransferase</fullName>
        <shortName evidence="1">UDP-Ara4O aminotransferase</shortName>
    </alternativeName>
    <alternativeName>
        <fullName evidence="1">UDP-4-amino-4-deoxy-L-arabinose aminotransferase</fullName>
    </alternativeName>
</protein>
<gene>
    <name evidence="1" type="primary">arnB</name>
    <name type="ordered locus">SPA0566</name>
</gene>